<proteinExistence type="inferred from homology"/>
<dbReference type="EMBL" id="DP000487">
    <property type="protein sequence ID" value="ABW96818.1"/>
    <property type="status" value="ALT_SEQ"/>
    <property type="molecule type" value="Genomic_DNA"/>
</dbReference>
<dbReference type="RefSeq" id="NP_001162507.1">
    <property type="nucleotide sequence ID" value="NM_001169036.1"/>
</dbReference>
<dbReference type="SMR" id="A9CB34"/>
<dbReference type="STRING" id="9555.ENSPANP00000013179"/>
<dbReference type="GeneID" id="100137541"/>
<dbReference type="KEGG" id="panu:100137541"/>
<dbReference type="CTD" id="9814"/>
<dbReference type="eggNOG" id="KOG4775">
    <property type="taxonomic scope" value="Eukaryota"/>
</dbReference>
<dbReference type="Proteomes" id="UP000028761">
    <property type="component" value="Unplaced"/>
</dbReference>
<dbReference type="GO" id="GO:0005814">
    <property type="term" value="C:centriole"/>
    <property type="evidence" value="ECO:0000250"/>
    <property type="project" value="UniProtKB"/>
</dbReference>
<dbReference type="GO" id="GO:0005737">
    <property type="term" value="C:cytoplasm"/>
    <property type="evidence" value="ECO:0007669"/>
    <property type="project" value="UniProtKB-KW"/>
</dbReference>
<dbReference type="GO" id="GO:0019902">
    <property type="term" value="F:phosphatase binding"/>
    <property type="evidence" value="ECO:0000250"/>
    <property type="project" value="UniProtKB"/>
</dbReference>
<dbReference type="InterPro" id="IPR052270">
    <property type="entry name" value="CACF_protein"/>
</dbReference>
<dbReference type="PANTHER" id="PTHR22028:SF4">
    <property type="entry name" value="PROTEIN SFI1 HOMOLOG"/>
    <property type="match status" value="1"/>
</dbReference>
<dbReference type="PANTHER" id="PTHR22028">
    <property type="entry name" value="SFI1 SPINDLE BODY DOMAIN-CONTAINING PROTEIN-RELATED"/>
    <property type="match status" value="1"/>
</dbReference>
<name>SFI1_PAPAN</name>
<evidence type="ECO:0000250" key="1">
    <source>
        <dbReference type="UniProtKB" id="A8K8P3"/>
    </source>
</evidence>
<evidence type="ECO:0000256" key="2">
    <source>
        <dbReference type="SAM" id="MobiDB-lite"/>
    </source>
</evidence>
<evidence type="ECO:0000305" key="3"/>
<comment type="function">
    <text evidence="1">Plays a role in the dynamic structure of centrosome-associated contractile fibers via its interaction with CETN2.</text>
</comment>
<comment type="subunit">
    <text evidence="1">Interacts with CETN2 (via C-terminus).</text>
</comment>
<comment type="subcellular location">
    <subcellularLocation>
        <location evidence="1">Cytoplasm</location>
        <location evidence="1">Cytoskeleton</location>
        <location evidence="1">Microtubule organizing center</location>
        <location evidence="1">Centrosome</location>
        <location evidence="1">Centriole</location>
    </subcellularLocation>
    <text evidence="1">Localized close to the centriole. Localizes to the distal end of centrioles.</text>
</comment>
<comment type="domain">
    <text evidence="1">CETN2-binding regions contains a conserved Trp residue in their C-terminal ends, which seems critical for interaction with CETN2.</text>
</comment>
<comment type="similarity">
    <text evidence="3">Belongs to the SFI1 family.</text>
</comment>
<comment type="caution">
    <text evidence="3">It is uncertain whether Met-1 or Met-17 is the initiator.</text>
</comment>
<comment type="sequence caution" evidence="3">
    <conflict type="erroneous gene model prediction">
        <sequence resource="EMBL-CDS" id="ABW96818"/>
    </conflict>
</comment>
<keyword id="KW-0963">Cytoplasm</keyword>
<keyword id="KW-0206">Cytoskeleton</keyword>
<keyword id="KW-1185">Reference proteome</keyword>
<keyword id="KW-0677">Repeat</keyword>
<organism>
    <name type="scientific">Papio anubis</name>
    <name type="common">Olive baboon</name>
    <dbReference type="NCBI Taxonomy" id="9555"/>
    <lineage>
        <taxon>Eukaryota</taxon>
        <taxon>Metazoa</taxon>
        <taxon>Chordata</taxon>
        <taxon>Craniata</taxon>
        <taxon>Vertebrata</taxon>
        <taxon>Euteleostomi</taxon>
        <taxon>Mammalia</taxon>
        <taxon>Eutheria</taxon>
        <taxon>Euarchontoglires</taxon>
        <taxon>Primates</taxon>
        <taxon>Haplorrhini</taxon>
        <taxon>Catarrhini</taxon>
        <taxon>Cercopithecidae</taxon>
        <taxon>Cercopithecinae</taxon>
        <taxon>Papio</taxon>
    </lineage>
</organism>
<gene>
    <name type="primary">SFI1</name>
</gene>
<protein>
    <recommendedName>
        <fullName>Protein SFI1 homolog</fullName>
    </recommendedName>
</protein>
<reference key="1">
    <citation type="submission" date="2007-11" db="EMBL/GenBank/DDBJ databases">
        <title>NISC comparative sequencing initiative.</title>
        <authorList>
            <person name="Antonellis A."/>
            <person name="Benjamin B."/>
            <person name="Blakesley R.W."/>
            <person name="Bouffard G.G."/>
            <person name="Brinkley C."/>
            <person name="Brooks S."/>
            <person name="Chu G."/>
            <person name="Chub I."/>
            <person name="Coleman H."/>
            <person name="Fuksenko T."/>
            <person name="Gestole M."/>
            <person name="Gregory M."/>
            <person name="Guan X."/>
            <person name="Gupta J."/>
            <person name="Gurson N."/>
            <person name="Han E."/>
            <person name="Han J."/>
            <person name="Hansen N."/>
            <person name="Hargrove A."/>
            <person name="Hines-Harris K."/>
            <person name="Ho S.-L."/>
            <person name="Hu P."/>
            <person name="Hunter G."/>
            <person name="Hurle B."/>
            <person name="Idol J.R."/>
            <person name="Johnson T."/>
            <person name="Knight E."/>
            <person name="Kwong P."/>
            <person name="Lee-Lin S.-Q."/>
            <person name="Legaspi R."/>
            <person name="Madden M."/>
            <person name="Maduro Q.L."/>
            <person name="Maduro V.B."/>
            <person name="Margulies E.H."/>
            <person name="Masiello C."/>
            <person name="Maskeri B."/>
            <person name="McDowell J."/>
            <person name="Merkulov G."/>
            <person name="Montemayor C."/>
            <person name="Mullikin J.C."/>
            <person name="Park M."/>
            <person name="Prasad A."/>
            <person name="Ramsahoye C."/>
            <person name="Reddix-Dugue N."/>
            <person name="Riebow N."/>
            <person name="Schandler K."/>
            <person name="Schueler M.G."/>
            <person name="Sison C."/>
            <person name="Smith L."/>
            <person name="Stantripop S."/>
            <person name="Thomas J.W."/>
            <person name="Thomas P.J."/>
            <person name="Tsipouri V."/>
            <person name="Young A."/>
            <person name="Green E.D."/>
        </authorList>
    </citation>
    <scope>NUCLEOTIDE SEQUENCE [LARGE SCALE GENOMIC DNA]</scope>
</reference>
<feature type="chain" id="PRO_0000334623" description="Protein SFI1 homolog">
    <location>
        <begin position="1"/>
        <end position="1235"/>
    </location>
</feature>
<feature type="repeat" description="HAT 1">
    <location>
        <begin position="131"/>
        <end position="163"/>
    </location>
</feature>
<feature type="repeat" description="HAT 2">
    <location>
        <begin position="165"/>
        <end position="194"/>
    </location>
</feature>
<feature type="repeat" description="HAT 3">
    <location>
        <begin position="263"/>
        <end position="295"/>
    </location>
</feature>
<feature type="repeat" description="HAT 4">
    <location>
        <begin position="327"/>
        <end position="361"/>
    </location>
</feature>
<feature type="repeat" description="HAT 5">
    <location>
        <begin position="392"/>
        <end position="424"/>
    </location>
</feature>
<feature type="repeat" description="HAT 6">
    <location>
        <begin position="1141"/>
        <end position="1173"/>
    </location>
</feature>
<feature type="region of interest" description="Interaction with CETN2" evidence="1">
    <location>
        <begin position="104"/>
        <end position="123"/>
    </location>
</feature>
<feature type="region of interest" description="Interaction with CETN2" evidence="1">
    <location>
        <begin position="468"/>
        <end position="487"/>
    </location>
</feature>
<feature type="region of interest" description="Interaction with CETN2" evidence="1">
    <location>
        <begin position="634"/>
        <end position="653"/>
    </location>
</feature>
<feature type="region of interest" description="Disordered" evidence="2">
    <location>
        <begin position="994"/>
        <end position="1120"/>
    </location>
</feature>
<feature type="compositionally biased region" description="Basic residues" evidence="2">
    <location>
        <begin position="997"/>
        <end position="1006"/>
    </location>
</feature>
<feature type="compositionally biased region" description="Low complexity" evidence="2">
    <location>
        <begin position="1049"/>
        <end position="1063"/>
    </location>
</feature>
<feature type="compositionally biased region" description="Low complexity" evidence="2">
    <location>
        <begin position="1085"/>
        <end position="1100"/>
    </location>
</feature>
<accession>A9CB34</accession>
<sequence length="1235" mass="146691">MSSRWLNFHEKMIKQRMEKKVDSRYFRDGAVKKPYSAKTLSNKKSSASFGIRRELPSTSHLVQYRGTHTCTRQGRLRELRIRCVARKFLYLWIRMTFGRVFPSKARFYYEQRLLRKVFEEWKEEWWVFHHEWKLCVRADCHYRYYLYNLMFQTWKTYVRQQQEMRNKYTRAEVHDAKQKMRQAWKSWLIYVVVRRTKLQMQTTALEFRQRSILRVWWSMWRQQLGQVRVSRALHASAVKHRALSLQLQAWSQWREQLLYVQKEKQKVVSAVKHHRHWQKQRFLKAWLEYLQVRRVKRQQNEMAERFHHVSVLQIHFCDWQQAWEQRQSLYAYHAQVEKLARKMALRRTFTHWKHYMLLCAEEAAQCEMAEEHHRHSQLYFCFRALKDNVTHAHLQQIRRNLAHRQHGVTLLHRFWNLWQSQIEEKKEREQLPLLHAAWDHYRIALLCKCIKLWLQYTQKRRYKQRLQARADGHFQQRTLPAAFHTWKRLWRWRQQDNVLNARATRFHRETLEKQVFSIWRQKTFQHQENRLAERMAILHAERQLLHRSWFTWHQQAAARHQEQEWQTAACAHHRHGRLKKAFCLWRESAQGLRAERTGRVRAAEFHVAQLLRRAWSQWRECLAVRGAERRKLMRADRHHQQRVRHRALQAWVTYQGRVRSILQEVAARESQHNRQLLRGALRRWKENTMARVDEAKKTFQASAHYRRTICSKVLVQWREAVSVQIYYRQQEDSAFWEARKVLDRGCLRTWFQRWRDCSRRSAQQRLQLERAVQHHRRQLLLEGLARWKMHHLECVRKRLLHRQSTQLLAQRLSRTCFRQWRQQLAARRQEQQATVRALWFWAFSLQAKVWATWLAFVLERRRKKARLQRALQAYQGQLLQEGATRLLRFAASMKASRQQLQAQQQVQAAHSLHRAVHRCATLWKQKVLGRGGKPQPLAAVAPSRKVTFEDPLLNCIAAGAGDATVGTKRPQAPLLQGALGCLAAEEPHARELNTAHSARKQPRRPHFLLEPARSQRPQKPKEHGLGMAQPAGPSLTRPFLAEAPTAQVPHSPGPGALSSAPGPKQIPTASTGPELLLLPPSSFMPCGAAAPARASAQPATPRDKPQVPPSLASVPDPHLLLPGDFSATRAGPGLSTTGSLDLEAELEGIQQQLLHYQTTKQNLWSCQRQASSLRRWLELSREEPGPEDQEVEQQVQKELQEVELQIQQLAEELQAQRQPIGTCIARIQALRQALR</sequence>